<sequence>MEEDTNISNKVIRYNTVNNIWETLPNFWTGTINPGVVSHKDDIYVVCDIKDEKNVKTCIFRYNTNTYNGWELVTTTESRLSALHTILYNNTIMMLHCYESYMLQDTFNVYTREWNHMCHQHSNSYIMYNILPIY</sequence>
<protein>
    <recommendedName>
        <fullName>Uncharacterized protein B21</fullName>
    </recommendedName>
</protein>
<keyword id="KW-1185">Reference proteome</keyword>
<organismHost>
    <name type="scientific">Bos taurus</name>
    <name type="common">Bovine</name>
    <dbReference type="NCBI Taxonomy" id="9913"/>
</organismHost>
<organism>
    <name type="scientific">Vaccinia virus (strain Western Reserve)</name>
    <name type="common">VACV</name>
    <name type="synonym">Vaccinia virus (strain WR)</name>
    <dbReference type="NCBI Taxonomy" id="10254"/>
    <lineage>
        <taxon>Viruses</taxon>
        <taxon>Varidnaviria</taxon>
        <taxon>Bamfordvirae</taxon>
        <taxon>Nucleocytoviricota</taxon>
        <taxon>Pokkesviricetes</taxon>
        <taxon>Chitovirales</taxon>
        <taxon>Poxviridae</taxon>
        <taxon>Chordopoxvirinae</taxon>
        <taxon>Orthopoxvirus</taxon>
        <taxon>Vaccinia virus</taxon>
    </lineage>
</organism>
<gene>
    <name type="ordered locus">VACWR204</name>
    <name type="ORF">B21R</name>
</gene>
<feature type="chain" id="PRO_0000099373" description="Uncharacterized protein B21">
    <location>
        <begin position="1"/>
        <end position="134"/>
    </location>
</feature>
<comment type="miscellaneous">
    <text>Corresponds to the C-terminal part of cowpoxvirus Kelch repeat and BTB domain-containing protein 2.</text>
</comment>
<comment type="similarity">
    <text evidence="1">Belongs to the orthopoxviruses B21 protein family.</text>
</comment>
<evidence type="ECO:0000305" key="1"/>
<proteinExistence type="inferred from homology"/>
<accession>P17373</accession>
<accession>Q76ZK4</accession>
<name>B21_VACCW</name>
<reference key="1">
    <citation type="journal article" date="1991" name="J. Gen. Virol.">
        <title>Nucleotide sequence of 42 kbp of vaccinia virus strain WR from near the right inverted terminal repeat.</title>
        <authorList>
            <person name="Smith G.L."/>
            <person name="Chan Y.S."/>
            <person name="Howard S.T."/>
        </authorList>
    </citation>
    <scope>NUCLEOTIDE SEQUENCE [GENOMIC DNA]</scope>
</reference>
<reference key="2">
    <citation type="journal article" date="1989" name="J. Virol.">
        <title>Vaccinia virus encodes two proteins that are structurally related to members of the plasma serine protease inhibitor superfamily.</title>
        <authorList>
            <person name="Kotwal G.J."/>
            <person name="Moss B."/>
        </authorList>
    </citation>
    <scope>NUCLEOTIDE SEQUENCE [GENOMIC DNA]</scope>
</reference>
<reference key="3">
    <citation type="submission" date="2003-02" db="EMBL/GenBank/DDBJ databases">
        <title>Sequencing of the coding region of Vaccinia-WR to an average 9-fold redundancy and an error rate of 0.16/10kb.</title>
        <authorList>
            <person name="Esposito J.J."/>
            <person name="Frace A.M."/>
            <person name="Sammons S.A."/>
            <person name="Olsen-Rasmussen M."/>
            <person name="Osborne J."/>
            <person name="Wohlhueter R."/>
        </authorList>
    </citation>
    <scope>NUCLEOTIDE SEQUENCE [LARGE SCALE GENOMIC DNA]</scope>
</reference>
<dbReference type="EMBL" id="D11079">
    <property type="protein sequence ID" value="BAA01851.1"/>
    <property type="molecule type" value="Genomic_DNA"/>
</dbReference>
<dbReference type="EMBL" id="M24217">
    <property type="protein sequence ID" value="AAA48343.1"/>
    <property type="molecule type" value="Genomic_DNA"/>
</dbReference>
<dbReference type="EMBL" id="AY243312">
    <property type="protein sequence ID" value="AAO89483.1"/>
    <property type="molecule type" value="Genomic_DNA"/>
</dbReference>
<dbReference type="PIR" id="C30175">
    <property type="entry name" value="WMVA16"/>
</dbReference>
<dbReference type="RefSeq" id="YP_233086.1">
    <property type="nucleotide sequence ID" value="NC_006998.1"/>
</dbReference>
<dbReference type="SMR" id="P17373"/>
<dbReference type="DNASU" id="3707581"/>
<dbReference type="GeneID" id="3707581"/>
<dbReference type="KEGG" id="vg:3707581"/>
<dbReference type="Proteomes" id="UP000000344">
    <property type="component" value="Genome"/>
</dbReference>
<dbReference type="Gene3D" id="2.120.10.80">
    <property type="entry name" value="Kelch-type beta propeller"/>
    <property type="match status" value="1"/>
</dbReference>
<dbReference type="InterPro" id="IPR015915">
    <property type="entry name" value="Kelch-typ_b-propeller"/>
</dbReference>
<dbReference type="SUPFAM" id="SSF117281">
    <property type="entry name" value="Kelch motif"/>
    <property type="match status" value="1"/>
</dbReference>